<feature type="chain" id="PRO_0000228046" description="Mitochondrial import inner membrane translocase subunit tim9">
    <location>
        <begin position="1"/>
        <end position="88"/>
    </location>
</feature>
<feature type="short sequence motif" description="Twin CX3C motif">
    <location>
        <begin position="35"/>
        <end position="59"/>
    </location>
</feature>
<feature type="disulfide bond" evidence="1">
    <location>
        <begin position="35"/>
        <end position="59"/>
    </location>
</feature>
<feature type="disulfide bond" evidence="1">
    <location>
        <begin position="39"/>
        <end position="55"/>
    </location>
</feature>
<protein>
    <recommendedName>
        <fullName>Mitochondrial import inner membrane translocase subunit tim9</fullName>
    </recommendedName>
</protein>
<reference key="1">
    <citation type="journal article" date="2004" name="Mol. Biol. Cell">
        <title>Reconstituted TOM core complex and Tim9/Tim10 complex of mitochondria are sufficient for translocation of the ADP/ATP carrier across membranes.</title>
        <authorList>
            <person name="Vasiljev A."/>
            <person name="Ahting U."/>
            <person name="Nargang F.E."/>
            <person name="Go N.E."/>
            <person name="Habib S.J."/>
            <person name="Kozany C."/>
            <person name="Panneels V."/>
            <person name="Sinning I."/>
            <person name="Prokisch H."/>
            <person name="Neupert W."/>
            <person name="Nussberger S."/>
            <person name="Rapaport D."/>
        </authorList>
    </citation>
    <scope>NUCLEOTIDE SEQUENCE [MRNA]</scope>
    <scope>FUNCTION</scope>
    <scope>SUBCELLULAR LOCATION</scope>
    <scope>SUBUNIT</scope>
</reference>
<reference key="2">
    <citation type="journal article" date="2003" name="Nature">
        <title>The genome sequence of the filamentous fungus Neurospora crassa.</title>
        <authorList>
            <person name="Galagan J.E."/>
            <person name="Calvo S.E."/>
            <person name="Borkovich K.A."/>
            <person name="Selker E.U."/>
            <person name="Read N.D."/>
            <person name="Jaffe D.B."/>
            <person name="FitzHugh W."/>
            <person name="Ma L.-J."/>
            <person name="Smirnov S."/>
            <person name="Purcell S."/>
            <person name="Rehman B."/>
            <person name="Elkins T."/>
            <person name="Engels R."/>
            <person name="Wang S."/>
            <person name="Nielsen C.B."/>
            <person name="Butler J."/>
            <person name="Endrizzi M."/>
            <person name="Qui D."/>
            <person name="Ianakiev P."/>
            <person name="Bell-Pedersen D."/>
            <person name="Nelson M.A."/>
            <person name="Werner-Washburne M."/>
            <person name="Selitrennikoff C.P."/>
            <person name="Kinsey J.A."/>
            <person name="Braun E.L."/>
            <person name="Zelter A."/>
            <person name="Schulte U."/>
            <person name="Kothe G.O."/>
            <person name="Jedd G."/>
            <person name="Mewes H.-W."/>
            <person name="Staben C."/>
            <person name="Marcotte E."/>
            <person name="Greenberg D."/>
            <person name="Roy A."/>
            <person name="Foley K."/>
            <person name="Naylor J."/>
            <person name="Stange-Thomann N."/>
            <person name="Barrett R."/>
            <person name="Gnerre S."/>
            <person name="Kamal M."/>
            <person name="Kamvysselis M."/>
            <person name="Mauceli E.W."/>
            <person name="Bielke C."/>
            <person name="Rudd S."/>
            <person name="Frishman D."/>
            <person name="Krystofova S."/>
            <person name="Rasmussen C."/>
            <person name="Metzenberg R.L."/>
            <person name="Perkins D.D."/>
            <person name="Kroken S."/>
            <person name="Cogoni C."/>
            <person name="Macino G."/>
            <person name="Catcheside D.E.A."/>
            <person name="Li W."/>
            <person name="Pratt R.J."/>
            <person name="Osmani S.A."/>
            <person name="DeSouza C.P.C."/>
            <person name="Glass N.L."/>
            <person name="Orbach M.J."/>
            <person name="Berglund J.A."/>
            <person name="Voelker R."/>
            <person name="Yarden O."/>
            <person name="Plamann M."/>
            <person name="Seiler S."/>
            <person name="Dunlap J.C."/>
            <person name="Radford A."/>
            <person name="Aramayo R."/>
            <person name="Natvig D.O."/>
            <person name="Alex L.A."/>
            <person name="Mannhaupt G."/>
            <person name="Ebbole D.J."/>
            <person name="Freitag M."/>
            <person name="Paulsen I."/>
            <person name="Sachs M.S."/>
            <person name="Lander E.S."/>
            <person name="Nusbaum C."/>
            <person name="Birren B.W."/>
        </authorList>
    </citation>
    <scope>NUCLEOTIDE SEQUENCE [LARGE SCALE GENOMIC DNA]</scope>
    <source>
        <strain>ATCC 24698 / 74-OR23-1A / CBS 708.71 / DSM 1257 / FGSC 987</strain>
    </source>
</reference>
<organism>
    <name type="scientific">Neurospora crassa (strain ATCC 24698 / 74-OR23-1A / CBS 708.71 / DSM 1257 / FGSC 987)</name>
    <dbReference type="NCBI Taxonomy" id="367110"/>
    <lineage>
        <taxon>Eukaryota</taxon>
        <taxon>Fungi</taxon>
        <taxon>Dikarya</taxon>
        <taxon>Ascomycota</taxon>
        <taxon>Pezizomycotina</taxon>
        <taxon>Sordariomycetes</taxon>
        <taxon>Sordariomycetidae</taxon>
        <taxon>Sordariales</taxon>
        <taxon>Sordariaceae</taxon>
        <taxon>Neurospora</taxon>
    </lineage>
</organism>
<accession>Q8J1Z1</accession>
<comment type="function">
    <text evidence="2">Mitochondrial intermembrane chaperone that participates in the import and insertion of multi-pass transmembrane proteins into the mitochondrial inner membrane. Also required for the transfer of beta-barrel precursors from the TOM complex to the sorting and assembly machinery (SAM complex) of the outer membrane. Acts as a chaperone-like protein that protects the hydrophobic precursors from aggregation and guide them through the mitochondrial intermembrane space.</text>
</comment>
<comment type="subunit">
    <text evidence="2">Heterohexamer; composed of 3 copies of tim9 and 3 copies of tim10, named soluble 70 kDa complex. Associates with the tim22 complex, whose core is composed of tim22 and tim54. Interacts with the transmembrane regions of multi-pass transmembrane proteins in transit.</text>
</comment>
<comment type="subcellular location">
    <subcellularLocation>
        <location evidence="2">Mitochondrion inner membrane</location>
        <topology evidence="2">Peripheral membrane protein</topology>
        <orientation evidence="2">Intermembrane side</orientation>
    </subcellularLocation>
</comment>
<comment type="domain">
    <text evidence="1">The twin CX3C motif contains 4 conserved Cys residues that form 2 disulfide bonds in the mitochondrial intermembrane space. However, during the transit of tim9 from cytoplasm into mitochondrion, the Cys residues probably coordinate zinc, thereby preventing folding and allowing its transfer across mitochondrial outer membrane (By similarity).</text>
</comment>
<comment type="similarity">
    <text evidence="3">Belongs to the small Tim family.</text>
</comment>
<sequence length="88" mass="9860">MDGLTAAESRELDQRLQKRQVKEFMSVFGNLVDNCFTACVDDFTSKALSGRESGCISRCVLKSMSTQTRLGERFGELNAAMTAEMQRR</sequence>
<evidence type="ECO:0000250" key="1"/>
<evidence type="ECO:0000269" key="2">
    <source>
    </source>
</evidence>
<evidence type="ECO:0000305" key="3"/>
<name>TIM9_NEUCR</name>
<gene>
    <name type="primary">tim9</name>
    <name type="ORF">NCU00198</name>
</gene>
<proteinExistence type="evidence at protein level"/>
<dbReference type="EMBL" id="AY141127">
    <property type="protein sequence ID" value="AAN17751.1"/>
    <property type="molecule type" value="mRNA"/>
</dbReference>
<dbReference type="EMBL" id="CM002238">
    <property type="protein sequence ID" value="EAA27347.1"/>
    <property type="molecule type" value="Genomic_DNA"/>
</dbReference>
<dbReference type="RefSeq" id="XP_956583.1">
    <property type="nucleotide sequence ID" value="XM_951490.2"/>
</dbReference>
<dbReference type="SMR" id="Q8J1Z1"/>
<dbReference type="FunCoup" id="Q8J1Z1">
    <property type="interactions" value="883"/>
</dbReference>
<dbReference type="STRING" id="367110.Q8J1Z1"/>
<dbReference type="PaxDb" id="5141-EFNCRP00000000062"/>
<dbReference type="EnsemblFungi" id="EAA27347">
    <property type="protein sequence ID" value="EAA27347"/>
    <property type="gene ID" value="NCU00198"/>
</dbReference>
<dbReference type="GeneID" id="3872730"/>
<dbReference type="KEGG" id="ncr:NCU00198"/>
<dbReference type="VEuPathDB" id="FungiDB:NCU00198"/>
<dbReference type="HOGENOM" id="CLU_141397_3_0_1"/>
<dbReference type="InParanoid" id="Q8J1Z1"/>
<dbReference type="OrthoDB" id="1551503at2759"/>
<dbReference type="Proteomes" id="UP000001805">
    <property type="component" value="Chromosome 3, Linkage Group III"/>
</dbReference>
<dbReference type="GO" id="GO:0005743">
    <property type="term" value="C:mitochondrial inner membrane"/>
    <property type="evidence" value="ECO:0007669"/>
    <property type="project" value="UniProtKB-SubCell"/>
</dbReference>
<dbReference type="GO" id="GO:0046872">
    <property type="term" value="F:metal ion binding"/>
    <property type="evidence" value="ECO:0007669"/>
    <property type="project" value="UniProtKB-KW"/>
</dbReference>
<dbReference type="GO" id="GO:0015031">
    <property type="term" value="P:protein transport"/>
    <property type="evidence" value="ECO:0007669"/>
    <property type="project" value="UniProtKB-KW"/>
</dbReference>
<dbReference type="Gene3D" id="1.10.287.810">
    <property type="entry name" value="Mitochondrial import inner membrane translocase subunit tim13 like domains"/>
    <property type="match status" value="1"/>
</dbReference>
<dbReference type="InterPro" id="IPR050673">
    <property type="entry name" value="Mito_inner_translocase_sub"/>
</dbReference>
<dbReference type="InterPro" id="IPR004217">
    <property type="entry name" value="Tim10-like"/>
</dbReference>
<dbReference type="InterPro" id="IPR035427">
    <property type="entry name" value="Tim10-like_dom_sf"/>
</dbReference>
<dbReference type="PANTHER" id="PTHR13172">
    <property type="entry name" value="MITOCHONDRIAL IMPORT INNER MEMBRANE TRANSLOCASE SUBUNIT TIM9B"/>
    <property type="match status" value="1"/>
</dbReference>
<dbReference type="Pfam" id="PF02953">
    <property type="entry name" value="zf-Tim10_DDP"/>
    <property type="match status" value="1"/>
</dbReference>
<dbReference type="SUPFAM" id="SSF144122">
    <property type="entry name" value="Tim10-like"/>
    <property type="match status" value="1"/>
</dbReference>
<keyword id="KW-0143">Chaperone</keyword>
<keyword id="KW-1015">Disulfide bond</keyword>
<keyword id="KW-0472">Membrane</keyword>
<keyword id="KW-0479">Metal-binding</keyword>
<keyword id="KW-0496">Mitochondrion</keyword>
<keyword id="KW-0999">Mitochondrion inner membrane</keyword>
<keyword id="KW-0653">Protein transport</keyword>
<keyword id="KW-1185">Reference proteome</keyword>
<keyword id="KW-0811">Translocation</keyword>
<keyword id="KW-0813">Transport</keyword>
<keyword id="KW-0862">Zinc</keyword>